<protein>
    <recommendedName>
        <fullName>Insulin</fullName>
    </recommendedName>
    <component>
        <recommendedName>
            <fullName>Insulin B chain</fullName>
        </recommendedName>
    </component>
    <component>
        <recommendedName>
            <fullName>Insulin A chain</fullName>
        </recommendedName>
    </component>
</protein>
<proteinExistence type="evidence at protein level"/>
<organism>
    <name type="scientific">Atractosteus spatula</name>
    <name type="common">Alligator gar</name>
    <name type="synonym">Lepisosteus spatula</name>
    <dbReference type="NCBI Taxonomy" id="7917"/>
    <lineage>
        <taxon>Eukaryota</taxon>
        <taxon>Metazoa</taxon>
        <taxon>Chordata</taxon>
        <taxon>Craniata</taxon>
        <taxon>Vertebrata</taxon>
        <taxon>Euteleostomi</taxon>
        <taxon>Actinopterygii</taxon>
        <taxon>Neopterygii</taxon>
        <taxon>Holostei</taxon>
        <taxon>Semionotiformes</taxon>
        <taxon>Lepisosteidae</taxon>
        <taxon>Atractosteus</taxon>
    </lineage>
</organism>
<accession>P09476</accession>
<keyword id="KW-0119">Carbohydrate metabolism</keyword>
<keyword id="KW-0903">Direct protein sequencing</keyword>
<keyword id="KW-1015">Disulfide bond</keyword>
<keyword id="KW-0313">Glucose metabolism</keyword>
<keyword id="KW-0372">Hormone</keyword>
<keyword id="KW-0964">Secreted</keyword>
<name>INS_ATRSP</name>
<feature type="peptide" id="PRO_0000015830" description="Insulin B chain" evidence="1">
    <location>
        <begin position="1"/>
        <end position="31"/>
    </location>
</feature>
<feature type="peptide" id="PRO_0000015831" description="Insulin A chain" evidence="1">
    <location>
        <begin position="32"/>
        <end position="52"/>
    </location>
</feature>
<feature type="disulfide bond" description="Interchain (between B and A chains)">
    <location>
        <begin position="7"/>
        <end position="38"/>
    </location>
</feature>
<feature type="disulfide bond" description="Interchain (between B and A chains)">
    <location>
        <begin position="19"/>
        <end position="51"/>
    </location>
</feature>
<feature type="disulfide bond">
    <location>
        <begin position="37"/>
        <end position="42"/>
    </location>
</feature>
<feature type="non-consecutive residues" evidence="2">
    <location>
        <begin position="31"/>
        <end position="32"/>
    </location>
</feature>
<comment type="function">
    <text>Insulin decreases blood glucose concentration. It increases cell permeability to monosaccharides, amino acids and fatty acids. It accelerates glycolysis, the pentose phosphate cycle, and glycogen synthesis in liver.</text>
</comment>
<comment type="subunit">
    <text>Heterodimer of a B chain and an A chain linked by two disulfide bonds.</text>
</comment>
<comment type="subcellular location">
    <subcellularLocation>
        <location>Secreted</location>
    </subcellularLocation>
</comment>
<comment type="similarity">
    <text evidence="2">Belongs to the insulin family.</text>
</comment>
<evidence type="ECO:0000269" key="1">
    <source>
    </source>
</evidence>
<evidence type="ECO:0000305" key="2"/>
<sequence>AANQHLCGSHLVEALYLVCGEKGFFYNPNKVGIVEQCCHKPCTIYELENYCN</sequence>
<dbReference type="PIR" id="S09342">
    <property type="entry name" value="INGXA"/>
</dbReference>
<dbReference type="SMR" id="P09476"/>
<dbReference type="GO" id="GO:0005615">
    <property type="term" value="C:extracellular space"/>
    <property type="evidence" value="ECO:0007669"/>
    <property type="project" value="TreeGrafter"/>
</dbReference>
<dbReference type="GO" id="GO:0005179">
    <property type="term" value="F:hormone activity"/>
    <property type="evidence" value="ECO:0007669"/>
    <property type="project" value="UniProtKB-KW"/>
</dbReference>
<dbReference type="GO" id="GO:0006006">
    <property type="term" value="P:glucose metabolic process"/>
    <property type="evidence" value="ECO:0007669"/>
    <property type="project" value="UniProtKB-KW"/>
</dbReference>
<dbReference type="CDD" id="cd04367">
    <property type="entry name" value="IlGF_insulin_like"/>
    <property type="match status" value="1"/>
</dbReference>
<dbReference type="Gene3D" id="1.10.100.10">
    <property type="entry name" value="Insulin-like"/>
    <property type="match status" value="1"/>
</dbReference>
<dbReference type="InterPro" id="IPR004825">
    <property type="entry name" value="Insulin"/>
</dbReference>
<dbReference type="InterPro" id="IPR016179">
    <property type="entry name" value="Insulin-like"/>
</dbReference>
<dbReference type="InterPro" id="IPR036438">
    <property type="entry name" value="Insulin-like_sf"/>
</dbReference>
<dbReference type="InterPro" id="IPR022353">
    <property type="entry name" value="Insulin_CS"/>
</dbReference>
<dbReference type="InterPro" id="IPR022352">
    <property type="entry name" value="Insulin_family"/>
</dbReference>
<dbReference type="PANTHER" id="PTHR11454:SF9">
    <property type="entry name" value="INSULIN"/>
    <property type="match status" value="1"/>
</dbReference>
<dbReference type="PANTHER" id="PTHR11454">
    <property type="entry name" value="INSULIN/INSULIN GROWTH FACTOR"/>
    <property type="match status" value="1"/>
</dbReference>
<dbReference type="Pfam" id="PF00049">
    <property type="entry name" value="Insulin"/>
    <property type="match status" value="2"/>
</dbReference>
<dbReference type="PRINTS" id="PR00277">
    <property type="entry name" value="INSULIN"/>
</dbReference>
<dbReference type="PRINTS" id="PR00276">
    <property type="entry name" value="INSULINFAMLY"/>
</dbReference>
<dbReference type="SMART" id="SM00078">
    <property type="entry name" value="IlGF"/>
    <property type="match status" value="1"/>
</dbReference>
<dbReference type="SUPFAM" id="SSF56994">
    <property type="entry name" value="Insulin-like"/>
    <property type="match status" value="1"/>
</dbReference>
<dbReference type="PROSITE" id="PS00262">
    <property type="entry name" value="INSULIN"/>
    <property type="match status" value="1"/>
</dbReference>
<gene>
    <name type="primary">ins</name>
</gene>
<reference key="1">
    <citation type="journal article" date="1987" name="Gen. Comp. Endocrinol.">
        <title>Isolation and structures of alligator gar (Lepisosteus spatula) insulin and pancreatic polypeptide.</title>
        <authorList>
            <person name="Pollock H.G."/>
            <person name="Kimmel J.R."/>
            <person name="Hamilton J.W."/>
            <person name="Rouse J.B."/>
            <person name="Ebner K.E."/>
            <person name="Lance V."/>
            <person name="Rawitch A.B."/>
        </authorList>
    </citation>
    <scope>PROTEIN SEQUENCE</scope>
</reference>